<reference key="1">
    <citation type="journal article" date="1997" name="Nature">
        <title>The complete genome sequence of the Gram-positive bacterium Bacillus subtilis.</title>
        <authorList>
            <person name="Kunst F."/>
            <person name="Ogasawara N."/>
            <person name="Moszer I."/>
            <person name="Albertini A.M."/>
            <person name="Alloni G."/>
            <person name="Azevedo V."/>
            <person name="Bertero M.G."/>
            <person name="Bessieres P."/>
            <person name="Bolotin A."/>
            <person name="Borchert S."/>
            <person name="Borriss R."/>
            <person name="Boursier L."/>
            <person name="Brans A."/>
            <person name="Braun M."/>
            <person name="Brignell S.C."/>
            <person name="Bron S."/>
            <person name="Brouillet S."/>
            <person name="Bruschi C.V."/>
            <person name="Caldwell B."/>
            <person name="Capuano V."/>
            <person name="Carter N.M."/>
            <person name="Choi S.-K."/>
            <person name="Codani J.-J."/>
            <person name="Connerton I.F."/>
            <person name="Cummings N.J."/>
            <person name="Daniel R.A."/>
            <person name="Denizot F."/>
            <person name="Devine K.M."/>
            <person name="Duesterhoeft A."/>
            <person name="Ehrlich S.D."/>
            <person name="Emmerson P.T."/>
            <person name="Entian K.-D."/>
            <person name="Errington J."/>
            <person name="Fabret C."/>
            <person name="Ferrari E."/>
            <person name="Foulger D."/>
            <person name="Fritz C."/>
            <person name="Fujita M."/>
            <person name="Fujita Y."/>
            <person name="Fuma S."/>
            <person name="Galizzi A."/>
            <person name="Galleron N."/>
            <person name="Ghim S.-Y."/>
            <person name="Glaser P."/>
            <person name="Goffeau A."/>
            <person name="Golightly E.J."/>
            <person name="Grandi G."/>
            <person name="Guiseppi G."/>
            <person name="Guy B.J."/>
            <person name="Haga K."/>
            <person name="Haiech J."/>
            <person name="Harwood C.R."/>
            <person name="Henaut A."/>
            <person name="Hilbert H."/>
            <person name="Holsappel S."/>
            <person name="Hosono S."/>
            <person name="Hullo M.-F."/>
            <person name="Itaya M."/>
            <person name="Jones L.-M."/>
            <person name="Joris B."/>
            <person name="Karamata D."/>
            <person name="Kasahara Y."/>
            <person name="Klaerr-Blanchard M."/>
            <person name="Klein C."/>
            <person name="Kobayashi Y."/>
            <person name="Koetter P."/>
            <person name="Koningstein G."/>
            <person name="Krogh S."/>
            <person name="Kumano M."/>
            <person name="Kurita K."/>
            <person name="Lapidus A."/>
            <person name="Lardinois S."/>
            <person name="Lauber J."/>
            <person name="Lazarevic V."/>
            <person name="Lee S.-M."/>
            <person name="Levine A."/>
            <person name="Liu H."/>
            <person name="Masuda S."/>
            <person name="Mauel C."/>
            <person name="Medigue C."/>
            <person name="Medina N."/>
            <person name="Mellado R.P."/>
            <person name="Mizuno M."/>
            <person name="Moestl D."/>
            <person name="Nakai S."/>
            <person name="Noback M."/>
            <person name="Noone D."/>
            <person name="O'Reilly M."/>
            <person name="Ogawa K."/>
            <person name="Ogiwara A."/>
            <person name="Oudega B."/>
            <person name="Park S.-H."/>
            <person name="Parro V."/>
            <person name="Pohl T.M."/>
            <person name="Portetelle D."/>
            <person name="Porwollik S."/>
            <person name="Prescott A.M."/>
            <person name="Presecan E."/>
            <person name="Pujic P."/>
            <person name="Purnelle B."/>
            <person name="Rapoport G."/>
            <person name="Rey M."/>
            <person name="Reynolds S."/>
            <person name="Rieger M."/>
            <person name="Rivolta C."/>
            <person name="Rocha E."/>
            <person name="Roche B."/>
            <person name="Rose M."/>
            <person name="Sadaie Y."/>
            <person name="Sato T."/>
            <person name="Scanlan E."/>
            <person name="Schleich S."/>
            <person name="Schroeter R."/>
            <person name="Scoffone F."/>
            <person name="Sekiguchi J."/>
            <person name="Sekowska A."/>
            <person name="Seror S.J."/>
            <person name="Serror P."/>
            <person name="Shin B.-S."/>
            <person name="Soldo B."/>
            <person name="Sorokin A."/>
            <person name="Tacconi E."/>
            <person name="Takagi T."/>
            <person name="Takahashi H."/>
            <person name="Takemaru K."/>
            <person name="Takeuchi M."/>
            <person name="Tamakoshi A."/>
            <person name="Tanaka T."/>
            <person name="Terpstra P."/>
            <person name="Tognoni A."/>
            <person name="Tosato V."/>
            <person name="Uchiyama S."/>
            <person name="Vandenbol M."/>
            <person name="Vannier F."/>
            <person name="Vassarotti A."/>
            <person name="Viari A."/>
            <person name="Wambutt R."/>
            <person name="Wedler E."/>
            <person name="Wedler H."/>
            <person name="Weitzenegger T."/>
            <person name="Winters P."/>
            <person name="Wipat A."/>
            <person name="Yamamoto H."/>
            <person name="Yamane K."/>
            <person name="Yasumoto K."/>
            <person name="Yata K."/>
            <person name="Yoshida K."/>
            <person name="Yoshikawa H.-F."/>
            <person name="Zumstein E."/>
            <person name="Yoshikawa H."/>
            <person name="Danchin A."/>
        </authorList>
    </citation>
    <scope>NUCLEOTIDE SEQUENCE [LARGE SCALE GENOMIC DNA]</scope>
    <source>
        <strain>168</strain>
    </source>
</reference>
<reference key="2">
    <citation type="submission" date="2006-08" db="PDB data bank">
        <title>NMR structure of Bacillus subtilis protein yorP, northeast structural genomics target SR399.</title>
        <authorList>
            <consortium name="Northeast structural genomics consortium (NESG)"/>
        </authorList>
    </citation>
    <scope>STRUCTURE BY NMR</scope>
</reference>
<gene>
    <name type="primary">yorP</name>
    <name type="ordered locus">BSU20300</name>
</gene>
<dbReference type="EMBL" id="AL009126">
    <property type="protein sequence ID" value="CAB13922.1"/>
    <property type="molecule type" value="Genomic_DNA"/>
</dbReference>
<dbReference type="RefSeq" id="NP_389912.1">
    <property type="nucleotide sequence ID" value="NC_000964.3"/>
</dbReference>
<dbReference type="RefSeq" id="WP_009967472.1">
    <property type="nucleotide sequence ID" value="NZ_OZ025638.1"/>
</dbReference>
<dbReference type="PDB" id="2HEQ">
    <property type="method" value="NMR"/>
    <property type="chains" value="A=2-71"/>
</dbReference>
<dbReference type="PDBsum" id="2HEQ"/>
<dbReference type="BMRB" id="O31898"/>
<dbReference type="SMR" id="O31898"/>
<dbReference type="FunCoup" id="O31898">
    <property type="interactions" value="47"/>
</dbReference>
<dbReference type="STRING" id="224308.BSU20300"/>
<dbReference type="PaxDb" id="224308-BSU20300"/>
<dbReference type="EnsemblBacteria" id="CAB13922">
    <property type="protein sequence ID" value="CAB13922"/>
    <property type="gene ID" value="BSU_20300"/>
</dbReference>
<dbReference type="GeneID" id="939535"/>
<dbReference type="KEGG" id="bsu:BSU20300"/>
<dbReference type="PATRIC" id="fig|224308.179.peg.2220"/>
<dbReference type="InParanoid" id="O31898"/>
<dbReference type="OrthoDB" id="2889449at2"/>
<dbReference type="BioCyc" id="BSUB:BSU20300-MONOMER"/>
<dbReference type="EvolutionaryTrace" id="O31898"/>
<dbReference type="Proteomes" id="UP000001570">
    <property type="component" value="Chromosome"/>
</dbReference>
<dbReference type="Gene3D" id="2.30.30.40">
    <property type="entry name" value="SH3 Domains"/>
    <property type="match status" value="1"/>
</dbReference>
<dbReference type="InterPro" id="IPR018591">
    <property type="entry name" value="YorP"/>
</dbReference>
<dbReference type="InterPro" id="IPR038027">
    <property type="entry name" value="YorP_sf"/>
</dbReference>
<dbReference type="Pfam" id="PF09629">
    <property type="entry name" value="YorP"/>
    <property type="match status" value="1"/>
</dbReference>
<dbReference type="SUPFAM" id="SSF159038">
    <property type="entry name" value="YorP-like"/>
    <property type="match status" value="1"/>
</dbReference>
<accession>O31898</accession>
<name>YORP_BACSU</name>
<proteinExistence type="evidence at protein level"/>
<organism>
    <name type="scientific">Bacillus subtilis (strain 168)</name>
    <dbReference type="NCBI Taxonomy" id="224308"/>
    <lineage>
        <taxon>Bacteria</taxon>
        <taxon>Bacillati</taxon>
        <taxon>Bacillota</taxon>
        <taxon>Bacilli</taxon>
        <taxon>Bacillales</taxon>
        <taxon>Bacillaceae</taxon>
        <taxon>Bacillus</taxon>
    </lineage>
</organism>
<keyword id="KW-0002">3D-structure</keyword>
<keyword id="KW-1185">Reference proteome</keyword>
<feature type="chain" id="PRO_0000359928" description="SPbeta prophage-derived uncharacterized protein YorP">
    <location>
        <begin position="1"/>
        <end position="71"/>
    </location>
</feature>
<feature type="strand" evidence="1">
    <location>
        <begin position="12"/>
        <end position="15"/>
    </location>
</feature>
<feature type="turn" evidence="1">
    <location>
        <begin position="20"/>
        <end position="22"/>
    </location>
</feature>
<feature type="strand" evidence="1">
    <location>
        <begin position="28"/>
        <end position="36"/>
    </location>
</feature>
<feature type="strand" evidence="1">
    <location>
        <begin position="43"/>
        <end position="48"/>
    </location>
</feature>
<feature type="strand" evidence="1">
    <location>
        <begin position="53"/>
        <end position="56"/>
    </location>
</feature>
<feature type="helix" evidence="1">
    <location>
        <begin position="58"/>
        <end position="60"/>
    </location>
</feature>
<feature type="strand" evidence="1">
    <location>
        <begin position="61"/>
        <end position="63"/>
    </location>
</feature>
<evidence type="ECO:0007829" key="1">
    <source>
        <dbReference type="PDB" id="2HEQ"/>
    </source>
</evidence>
<sequence>MPKYWSYPVGLAVEINNNARYGCPHHVGRKGKIIEHLHSATYDYAVSDETGDITYFKEHELTPLKGGLAYV</sequence>
<protein>
    <recommendedName>
        <fullName>SPbeta prophage-derived uncharacterized protein YorP</fullName>
    </recommendedName>
</protein>